<reference key="1">
    <citation type="submission" date="2007-05" db="EMBL/GenBank/DDBJ databases">
        <title>Complete sequence of chromosome of Psychrobacter sp. PRwf-1.</title>
        <authorList>
            <consortium name="US DOE Joint Genome Institute"/>
            <person name="Copeland A."/>
            <person name="Lucas S."/>
            <person name="Lapidus A."/>
            <person name="Barry K."/>
            <person name="Detter J.C."/>
            <person name="Glavina del Rio T."/>
            <person name="Hammon N."/>
            <person name="Israni S."/>
            <person name="Dalin E."/>
            <person name="Tice H."/>
            <person name="Pitluck S."/>
            <person name="Chain P."/>
            <person name="Malfatti S."/>
            <person name="Shin M."/>
            <person name="Vergez L."/>
            <person name="Schmutz J."/>
            <person name="Larimer F."/>
            <person name="Land M."/>
            <person name="Hauser L."/>
            <person name="Kyrpides N."/>
            <person name="Kim E."/>
            <person name="Tiedje J."/>
            <person name="Richardson P."/>
        </authorList>
    </citation>
    <scope>NUCLEOTIDE SEQUENCE [LARGE SCALE GENOMIC DNA]</scope>
    <source>
        <strain>PRwf-1</strain>
    </source>
</reference>
<gene>
    <name evidence="1" type="primary">alaS</name>
    <name type="ordered locus">PsycPRwf_1611</name>
</gene>
<proteinExistence type="inferred from homology"/>
<protein>
    <recommendedName>
        <fullName evidence="1">Alanine--tRNA ligase</fullName>
        <ecNumber evidence="1">6.1.1.7</ecNumber>
    </recommendedName>
    <alternativeName>
        <fullName evidence="1">Alanyl-tRNA synthetase</fullName>
        <shortName evidence="1">AlaRS</shortName>
    </alternativeName>
</protein>
<keyword id="KW-0030">Aminoacyl-tRNA synthetase</keyword>
<keyword id="KW-0067">ATP-binding</keyword>
<keyword id="KW-0963">Cytoplasm</keyword>
<keyword id="KW-0436">Ligase</keyword>
<keyword id="KW-0479">Metal-binding</keyword>
<keyword id="KW-0547">Nucleotide-binding</keyword>
<keyword id="KW-0648">Protein biosynthesis</keyword>
<keyword id="KW-0694">RNA-binding</keyword>
<keyword id="KW-0820">tRNA-binding</keyword>
<keyword id="KW-0862">Zinc</keyword>
<feature type="chain" id="PRO_0000347745" description="Alanine--tRNA ligase">
    <location>
        <begin position="1"/>
        <end position="903"/>
    </location>
</feature>
<feature type="binding site" evidence="1">
    <location>
        <position position="581"/>
    </location>
    <ligand>
        <name>Zn(2+)</name>
        <dbReference type="ChEBI" id="CHEBI:29105"/>
    </ligand>
</feature>
<feature type="binding site" evidence="1">
    <location>
        <position position="585"/>
    </location>
    <ligand>
        <name>Zn(2+)</name>
        <dbReference type="ChEBI" id="CHEBI:29105"/>
    </ligand>
</feature>
<feature type="binding site" evidence="1">
    <location>
        <position position="693"/>
    </location>
    <ligand>
        <name>Zn(2+)</name>
        <dbReference type="ChEBI" id="CHEBI:29105"/>
    </ligand>
</feature>
<feature type="binding site" evidence="1">
    <location>
        <position position="697"/>
    </location>
    <ligand>
        <name>Zn(2+)</name>
        <dbReference type="ChEBI" id="CHEBI:29105"/>
    </ligand>
</feature>
<organism>
    <name type="scientific">Psychrobacter sp. (strain PRwf-1)</name>
    <dbReference type="NCBI Taxonomy" id="349106"/>
    <lineage>
        <taxon>Bacteria</taxon>
        <taxon>Pseudomonadati</taxon>
        <taxon>Pseudomonadota</taxon>
        <taxon>Gammaproteobacteria</taxon>
        <taxon>Moraxellales</taxon>
        <taxon>Moraxellaceae</taxon>
        <taxon>Psychrobacter</taxon>
    </lineage>
</organism>
<sequence length="903" mass="98878">MTHSAPSNPTQLPSDKFLRTADVRKAFIDFFVSKQHTHVPSSSLVPYNDPTLLFTNAGMNQFKDCFLGIDKRDYTRAVTSQKCVRAGGKHNDLDNVGYTARHHTFFEMLGNFSFGDYFKKSAIAYAWEFLTSKQWLGLDADKLYVTIYESDDEAFDIWHQDIGLAAERIIRIGDNKGAPYASDNFWAMGDTGPCGPCSEVFYDHGEHVEGGLPGTPEEDGDRYIEVWNCVFMQFNRQPDGTMEPLPAPSVDTGMGLERISAILQGVHSNYEIDLFVNLINSAADIIGIKNDNQASLKVVADHIRAVSFLIADGVLPSNEGRGYVLRRIIRRAVRHGNKLGAEDSFFYKMVAPLVKEMGDAYPQLVEKQAFIEKAIEKEEVQFAKTLAQGLRLLDSELESLKSGDVLSGEAAFKLYDTYGFPVDLTADITRERGIGIDEAGFDEQMNIQRQRARDAGKFDVDYSAAIKVETPTEFVGYEQLDEKEVNIIGLYQDGKEVEVLNEGDEGVIVLDRTPFYAEGGGQVGEMGEIRTSSGVFNVEDTKKSGQAFIHHGVVNMGSLQKSQTADAQVVSAIRSASARNHSATHLLHAALRKVLGDSVSQKGSLVSSEMLRFDFSYDNAVSQKDLATIERLVNEQIQANVETHIELMNIDDAMAKGAAALFGEKYGETVRVLTMGTTEIEDGIQKPFSIELCGGLHVKRTGDIGLFKITSESGIAAGIRRIEALTGMGALRYIQQADSQLTALANQLKAKRPEVADRVQTMADKQRELEKQIERLNQKIASAQAATLVDNVQTIADKKVLIAQVAGIDGKAMRGLIDDIKSKLQDTIIILVGEKDGQLALAASVSKSLTGDIKAGDIIRHLADELEGKGGGKPDYAQGGAPSSDKLTGVMQALPNWVASQLS</sequence>
<accession>A5WFW1</accession>
<dbReference type="EC" id="6.1.1.7" evidence="1"/>
<dbReference type="EMBL" id="CP000713">
    <property type="protein sequence ID" value="ABQ94552.1"/>
    <property type="molecule type" value="Genomic_DNA"/>
</dbReference>
<dbReference type="SMR" id="A5WFW1"/>
<dbReference type="STRING" id="349106.PsycPRwf_1611"/>
<dbReference type="KEGG" id="prw:PsycPRwf_1611"/>
<dbReference type="eggNOG" id="COG0013">
    <property type="taxonomic scope" value="Bacteria"/>
</dbReference>
<dbReference type="HOGENOM" id="CLU_004485_1_1_6"/>
<dbReference type="GO" id="GO:0005829">
    <property type="term" value="C:cytosol"/>
    <property type="evidence" value="ECO:0007669"/>
    <property type="project" value="TreeGrafter"/>
</dbReference>
<dbReference type="GO" id="GO:0004813">
    <property type="term" value="F:alanine-tRNA ligase activity"/>
    <property type="evidence" value="ECO:0007669"/>
    <property type="project" value="UniProtKB-UniRule"/>
</dbReference>
<dbReference type="GO" id="GO:0002161">
    <property type="term" value="F:aminoacyl-tRNA deacylase activity"/>
    <property type="evidence" value="ECO:0007669"/>
    <property type="project" value="TreeGrafter"/>
</dbReference>
<dbReference type="GO" id="GO:0005524">
    <property type="term" value="F:ATP binding"/>
    <property type="evidence" value="ECO:0007669"/>
    <property type="project" value="UniProtKB-UniRule"/>
</dbReference>
<dbReference type="GO" id="GO:0000049">
    <property type="term" value="F:tRNA binding"/>
    <property type="evidence" value="ECO:0007669"/>
    <property type="project" value="UniProtKB-KW"/>
</dbReference>
<dbReference type="GO" id="GO:0008270">
    <property type="term" value="F:zinc ion binding"/>
    <property type="evidence" value="ECO:0007669"/>
    <property type="project" value="UniProtKB-UniRule"/>
</dbReference>
<dbReference type="GO" id="GO:0006419">
    <property type="term" value="P:alanyl-tRNA aminoacylation"/>
    <property type="evidence" value="ECO:0007669"/>
    <property type="project" value="UniProtKB-UniRule"/>
</dbReference>
<dbReference type="GO" id="GO:0045892">
    <property type="term" value="P:negative regulation of DNA-templated transcription"/>
    <property type="evidence" value="ECO:0007669"/>
    <property type="project" value="TreeGrafter"/>
</dbReference>
<dbReference type="CDD" id="cd00673">
    <property type="entry name" value="AlaRS_core"/>
    <property type="match status" value="1"/>
</dbReference>
<dbReference type="FunFam" id="2.40.30.130:FF:000001">
    <property type="entry name" value="Alanine--tRNA ligase"/>
    <property type="match status" value="1"/>
</dbReference>
<dbReference type="FunFam" id="3.10.310.40:FF:000001">
    <property type="entry name" value="Alanine--tRNA ligase"/>
    <property type="match status" value="1"/>
</dbReference>
<dbReference type="FunFam" id="3.30.54.20:FF:000001">
    <property type="entry name" value="Alanine--tRNA ligase"/>
    <property type="match status" value="1"/>
</dbReference>
<dbReference type="FunFam" id="3.30.930.10:FF:000004">
    <property type="entry name" value="Alanine--tRNA ligase"/>
    <property type="match status" value="1"/>
</dbReference>
<dbReference type="FunFam" id="3.30.980.10:FF:000004">
    <property type="entry name" value="Alanine--tRNA ligase, cytoplasmic"/>
    <property type="match status" value="1"/>
</dbReference>
<dbReference type="Gene3D" id="2.40.30.130">
    <property type="match status" value="1"/>
</dbReference>
<dbReference type="Gene3D" id="3.10.310.40">
    <property type="match status" value="1"/>
</dbReference>
<dbReference type="Gene3D" id="3.30.54.20">
    <property type="match status" value="1"/>
</dbReference>
<dbReference type="Gene3D" id="6.10.250.550">
    <property type="match status" value="1"/>
</dbReference>
<dbReference type="Gene3D" id="3.30.930.10">
    <property type="entry name" value="Bira Bifunctional Protein, Domain 2"/>
    <property type="match status" value="1"/>
</dbReference>
<dbReference type="Gene3D" id="3.30.980.10">
    <property type="entry name" value="Threonyl-trna Synthetase, Chain A, domain 2"/>
    <property type="match status" value="1"/>
</dbReference>
<dbReference type="HAMAP" id="MF_00036_B">
    <property type="entry name" value="Ala_tRNA_synth_B"/>
    <property type="match status" value="1"/>
</dbReference>
<dbReference type="InterPro" id="IPR045864">
    <property type="entry name" value="aa-tRNA-synth_II/BPL/LPL"/>
</dbReference>
<dbReference type="InterPro" id="IPR002318">
    <property type="entry name" value="Ala-tRNA-lgiase_IIc"/>
</dbReference>
<dbReference type="InterPro" id="IPR018162">
    <property type="entry name" value="Ala-tRNA-ligase_IIc_anticod-bd"/>
</dbReference>
<dbReference type="InterPro" id="IPR018165">
    <property type="entry name" value="Ala-tRNA-synth_IIc_core"/>
</dbReference>
<dbReference type="InterPro" id="IPR018164">
    <property type="entry name" value="Ala-tRNA-synth_IIc_N"/>
</dbReference>
<dbReference type="InterPro" id="IPR050058">
    <property type="entry name" value="Ala-tRNA_ligase"/>
</dbReference>
<dbReference type="InterPro" id="IPR023033">
    <property type="entry name" value="Ala_tRNA_ligase_euk/bac"/>
</dbReference>
<dbReference type="InterPro" id="IPR003156">
    <property type="entry name" value="DHHA1_dom"/>
</dbReference>
<dbReference type="InterPro" id="IPR018163">
    <property type="entry name" value="Thr/Ala-tRNA-synth_IIc_edit"/>
</dbReference>
<dbReference type="InterPro" id="IPR009000">
    <property type="entry name" value="Transl_B-barrel_sf"/>
</dbReference>
<dbReference type="InterPro" id="IPR012947">
    <property type="entry name" value="tRNA_SAD"/>
</dbReference>
<dbReference type="NCBIfam" id="TIGR00344">
    <property type="entry name" value="alaS"/>
    <property type="match status" value="1"/>
</dbReference>
<dbReference type="PANTHER" id="PTHR11777:SF9">
    <property type="entry name" value="ALANINE--TRNA LIGASE, CYTOPLASMIC"/>
    <property type="match status" value="1"/>
</dbReference>
<dbReference type="PANTHER" id="PTHR11777">
    <property type="entry name" value="ALANYL-TRNA SYNTHETASE"/>
    <property type="match status" value="1"/>
</dbReference>
<dbReference type="Pfam" id="PF02272">
    <property type="entry name" value="DHHA1"/>
    <property type="match status" value="1"/>
</dbReference>
<dbReference type="Pfam" id="PF01411">
    <property type="entry name" value="tRNA-synt_2c"/>
    <property type="match status" value="1"/>
</dbReference>
<dbReference type="Pfam" id="PF07973">
    <property type="entry name" value="tRNA_SAD"/>
    <property type="match status" value="1"/>
</dbReference>
<dbReference type="PRINTS" id="PR00980">
    <property type="entry name" value="TRNASYNTHALA"/>
</dbReference>
<dbReference type="SMART" id="SM00863">
    <property type="entry name" value="tRNA_SAD"/>
    <property type="match status" value="1"/>
</dbReference>
<dbReference type="SUPFAM" id="SSF55681">
    <property type="entry name" value="Class II aaRS and biotin synthetases"/>
    <property type="match status" value="1"/>
</dbReference>
<dbReference type="SUPFAM" id="SSF101353">
    <property type="entry name" value="Putative anticodon-binding domain of alanyl-tRNA synthetase (AlaRS)"/>
    <property type="match status" value="1"/>
</dbReference>
<dbReference type="SUPFAM" id="SSF55186">
    <property type="entry name" value="ThrRS/AlaRS common domain"/>
    <property type="match status" value="1"/>
</dbReference>
<dbReference type="SUPFAM" id="SSF50447">
    <property type="entry name" value="Translation proteins"/>
    <property type="match status" value="1"/>
</dbReference>
<dbReference type="PROSITE" id="PS50860">
    <property type="entry name" value="AA_TRNA_LIGASE_II_ALA"/>
    <property type="match status" value="1"/>
</dbReference>
<name>SYA_PSYWF</name>
<evidence type="ECO:0000255" key="1">
    <source>
        <dbReference type="HAMAP-Rule" id="MF_00036"/>
    </source>
</evidence>
<comment type="function">
    <text evidence="1">Catalyzes the attachment of alanine to tRNA(Ala) in a two-step reaction: alanine is first activated by ATP to form Ala-AMP and then transferred to the acceptor end of tRNA(Ala). Also edits incorrectly charged Ser-tRNA(Ala) and Gly-tRNA(Ala) via its editing domain.</text>
</comment>
<comment type="catalytic activity">
    <reaction evidence="1">
        <text>tRNA(Ala) + L-alanine + ATP = L-alanyl-tRNA(Ala) + AMP + diphosphate</text>
        <dbReference type="Rhea" id="RHEA:12540"/>
        <dbReference type="Rhea" id="RHEA-COMP:9657"/>
        <dbReference type="Rhea" id="RHEA-COMP:9923"/>
        <dbReference type="ChEBI" id="CHEBI:30616"/>
        <dbReference type="ChEBI" id="CHEBI:33019"/>
        <dbReference type="ChEBI" id="CHEBI:57972"/>
        <dbReference type="ChEBI" id="CHEBI:78442"/>
        <dbReference type="ChEBI" id="CHEBI:78497"/>
        <dbReference type="ChEBI" id="CHEBI:456215"/>
        <dbReference type="EC" id="6.1.1.7"/>
    </reaction>
</comment>
<comment type="cofactor">
    <cofactor evidence="1">
        <name>Zn(2+)</name>
        <dbReference type="ChEBI" id="CHEBI:29105"/>
    </cofactor>
    <text evidence="1">Binds 1 zinc ion per subunit.</text>
</comment>
<comment type="subcellular location">
    <subcellularLocation>
        <location evidence="1">Cytoplasm</location>
    </subcellularLocation>
</comment>
<comment type="domain">
    <text evidence="1">Consists of three domains; the N-terminal catalytic domain, the editing domain and the C-terminal C-Ala domain. The editing domain removes incorrectly charged amino acids, while the C-Ala domain, along with tRNA(Ala), serves as a bridge to cooperatively bring together the editing and aminoacylation centers thus stimulating deacylation of misacylated tRNAs.</text>
</comment>
<comment type="similarity">
    <text evidence="1">Belongs to the class-II aminoacyl-tRNA synthetase family.</text>
</comment>